<name>LYSJ_PYRFU</name>
<accession>Q8U0B4</accession>
<feature type="chain" id="PRO_0000112827" description="Putative [LysW]-aminoadipate semialdehyde/glutamate semialdehyde transaminase">
    <location>
        <begin position="1"/>
        <end position="366"/>
    </location>
</feature>
<feature type="binding site" evidence="1">
    <location>
        <begin position="90"/>
        <end position="91"/>
    </location>
    <ligand>
        <name>pyridoxal 5'-phosphate</name>
        <dbReference type="ChEBI" id="CHEBI:597326"/>
    </ligand>
</feature>
<feature type="binding site" evidence="1">
    <location>
        <position position="117"/>
    </location>
    <ligand>
        <name>pyridoxal 5'-phosphate</name>
        <dbReference type="ChEBI" id="CHEBI:597326"/>
    </ligand>
</feature>
<feature type="binding site" evidence="1">
    <location>
        <position position="120"/>
    </location>
    <ligand>
        <name>substrate</name>
    </ligand>
</feature>
<feature type="binding site" evidence="1">
    <location>
        <begin position="202"/>
        <end position="205"/>
    </location>
    <ligand>
        <name>pyridoxal 5'-phosphate</name>
        <dbReference type="ChEBI" id="CHEBI:597326"/>
    </ligand>
</feature>
<feature type="binding site" evidence="1">
    <location>
        <position position="254"/>
    </location>
    <ligand>
        <name>substrate</name>
    </ligand>
</feature>
<feature type="binding site" evidence="1">
    <location>
        <position position="255"/>
    </location>
    <ligand>
        <name>pyridoxal 5'-phosphate</name>
        <dbReference type="ChEBI" id="CHEBI:597326"/>
    </ligand>
</feature>
<feature type="modified residue" description="N6-(pyridoxal phosphate)lysine" evidence="1">
    <location>
        <position position="230"/>
    </location>
</feature>
<evidence type="ECO:0000255" key="1">
    <source>
        <dbReference type="HAMAP-Rule" id="MF_02084"/>
    </source>
</evidence>
<dbReference type="EC" id="2.6.1.118" evidence="1"/>
<dbReference type="EC" id="2.6.1.124" evidence="1"/>
<dbReference type="EMBL" id="AE009950">
    <property type="protein sequence ID" value="AAL81809.1"/>
    <property type="molecule type" value="Genomic_DNA"/>
</dbReference>
<dbReference type="RefSeq" id="WP_011012831.1">
    <property type="nucleotide sequence ID" value="NZ_CP023154.1"/>
</dbReference>
<dbReference type="SMR" id="Q8U0B4"/>
<dbReference type="IntAct" id="Q8U0B4">
    <property type="interactions" value="1"/>
</dbReference>
<dbReference type="STRING" id="186497.PF1685"/>
<dbReference type="PaxDb" id="186497-PF1685"/>
<dbReference type="KEGG" id="pfu:PF1685"/>
<dbReference type="PATRIC" id="fig|186497.12.peg.1753"/>
<dbReference type="eggNOG" id="arCOG00914">
    <property type="taxonomic scope" value="Archaea"/>
</dbReference>
<dbReference type="HOGENOM" id="CLU_016922_10_0_2"/>
<dbReference type="OrthoDB" id="85346at2157"/>
<dbReference type="PhylomeDB" id="Q8U0B4"/>
<dbReference type="UniPathway" id="UPA00033">
    <property type="reaction ID" value="UER00038"/>
</dbReference>
<dbReference type="UniPathway" id="UPA00068"/>
<dbReference type="Proteomes" id="UP000001013">
    <property type="component" value="Chromosome"/>
</dbReference>
<dbReference type="GO" id="GO:0005737">
    <property type="term" value="C:cytoplasm"/>
    <property type="evidence" value="ECO:0007669"/>
    <property type="project" value="UniProtKB-SubCell"/>
</dbReference>
<dbReference type="GO" id="GO:0042802">
    <property type="term" value="F:identical protein binding"/>
    <property type="evidence" value="ECO:0007669"/>
    <property type="project" value="TreeGrafter"/>
</dbReference>
<dbReference type="GO" id="GO:0030170">
    <property type="term" value="F:pyridoxal phosphate binding"/>
    <property type="evidence" value="ECO:0007669"/>
    <property type="project" value="InterPro"/>
</dbReference>
<dbReference type="GO" id="GO:0008483">
    <property type="term" value="F:transaminase activity"/>
    <property type="evidence" value="ECO:0007669"/>
    <property type="project" value="UniProtKB-UniRule"/>
</dbReference>
<dbReference type="GO" id="GO:0042450">
    <property type="term" value="P:arginine biosynthetic process via ornithine"/>
    <property type="evidence" value="ECO:0007669"/>
    <property type="project" value="UniProtKB-UniRule"/>
</dbReference>
<dbReference type="GO" id="GO:0006526">
    <property type="term" value="P:L-arginine biosynthetic process"/>
    <property type="evidence" value="ECO:0007669"/>
    <property type="project" value="UniProtKB-UniPathway"/>
</dbReference>
<dbReference type="GO" id="GO:0019878">
    <property type="term" value="P:lysine biosynthetic process via aminoadipic acid"/>
    <property type="evidence" value="ECO:0007669"/>
    <property type="project" value="UniProtKB-UniRule"/>
</dbReference>
<dbReference type="CDD" id="cd00610">
    <property type="entry name" value="OAT_like"/>
    <property type="match status" value="1"/>
</dbReference>
<dbReference type="FunFam" id="3.40.640.10:FF:000004">
    <property type="entry name" value="Acetylornithine aminotransferase"/>
    <property type="match status" value="1"/>
</dbReference>
<dbReference type="Gene3D" id="3.90.1150.10">
    <property type="entry name" value="Aspartate Aminotransferase, domain 1"/>
    <property type="match status" value="1"/>
</dbReference>
<dbReference type="Gene3D" id="3.40.640.10">
    <property type="entry name" value="Type I PLP-dependent aspartate aminotransferase-like (Major domain)"/>
    <property type="match status" value="1"/>
</dbReference>
<dbReference type="HAMAP" id="MF_02084">
    <property type="entry name" value="LysJ_aminotrans_3"/>
    <property type="match status" value="1"/>
</dbReference>
<dbReference type="InterPro" id="IPR004636">
    <property type="entry name" value="AcOrn/SuccOrn_fam"/>
</dbReference>
<dbReference type="InterPro" id="IPR005814">
    <property type="entry name" value="Aminotrans_3"/>
</dbReference>
<dbReference type="InterPro" id="IPR049704">
    <property type="entry name" value="Aminotrans_3_PPA_site"/>
</dbReference>
<dbReference type="InterPro" id="IPR050103">
    <property type="entry name" value="Class-III_PLP-dep_AT"/>
</dbReference>
<dbReference type="InterPro" id="IPR037537">
    <property type="entry name" value="LysJ"/>
</dbReference>
<dbReference type="InterPro" id="IPR015424">
    <property type="entry name" value="PyrdxlP-dep_Trfase"/>
</dbReference>
<dbReference type="InterPro" id="IPR015421">
    <property type="entry name" value="PyrdxlP-dep_Trfase_major"/>
</dbReference>
<dbReference type="InterPro" id="IPR015422">
    <property type="entry name" value="PyrdxlP-dep_Trfase_small"/>
</dbReference>
<dbReference type="NCBIfam" id="TIGR00707">
    <property type="entry name" value="argD"/>
    <property type="match status" value="1"/>
</dbReference>
<dbReference type="NCBIfam" id="NF003087">
    <property type="entry name" value="PRK04013.1"/>
    <property type="match status" value="1"/>
</dbReference>
<dbReference type="PANTHER" id="PTHR11986:SF79">
    <property type="entry name" value="ACETYLORNITHINE AMINOTRANSFERASE, MITOCHONDRIAL"/>
    <property type="match status" value="1"/>
</dbReference>
<dbReference type="PANTHER" id="PTHR11986">
    <property type="entry name" value="AMINOTRANSFERASE CLASS III"/>
    <property type="match status" value="1"/>
</dbReference>
<dbReference type="Pfam" id="PF00202">
    <property type="entry name" value="Aminotran_3"/>
    <property type="match status" value="1"/>
</dbReference>
<dbReference type="PIRSF" id="PIRSF000521">
    <property type="entry name" value="Transaminase_4ab_Lys_Orn"/>
    <property type="match status" value="1"/>
</dbReference>
<dbReference type="SUPFAM" id="SSF53383">
    <property type="entry name" value="PLP-dependent transferases"/>
    <property type="match status" value="1"/>
</dbReference>
<dbReference type="PROSITE" id="PS00600">
    <property type="entry name" value="AA_TRANSFER_CLASS_3"/>
    <property type="match status" value="1"/>
</dbReference>
<organism>
    <name type="scientific">Pyrococcus furiosus (strain ATCC 43587 / DSM 3638 / JCM 8422 / Vc1)</name>
    <dbReference type="NCBI Taxonomy" id="186497"/>
    <lineage>
        <taxon>Archaea</taxon>
        <taxon>Methanobacteriati</taxon>
        <taxon>Methanobacteriota</taxon>
        <taxon>Thermococci</taxon>
        <taxon>Thermococcales</taxon>
        <taxon>Thermococcaceae</taxon>
        <taxon>Pyrococcus</taxon>
    </lineage>
</organism>
<comment type="function">
    <text evidence="1">Involved in both the arginine and lysine biosynthetic pathways.</text>
</comment>
<comment type="catalytic activity">
    <reaction evidence="1">
        <text>[amino-group carrier protein]-C-terminal-gamma-(L-lysyl)-L-glutamate + 2-oxoglutarate = [amino-group carrier protein]-C-terminal-N-(1-carboxy-5-oxopentan-1-yl)-L-glutamine + L-glutamate</text>
        <dbReference type="Rhea" id="RHEA:41952"/>
        <dbReference type="Rhea" id="RHEA-COMP:9714"/>
        <dbReference type="Rhea" id="RHEA-COMP:9715"/>
        <dbReference type="ChEBI" id="CHEBI:16810"/>
        <dbReference type="ChEBI" id="CHEBI:29985"/>
        <dbReference type="ChEBI" id="CHEBI:78501"/>
        <dbReference type="ChEBI" id="CHEBI:78526"/>
        <dbReference type="EC" id="2.6.1.118"/>
    </reaction>
</comment>
<comment type="catalytic activity">
    <reaction evidence="1">
        <text>[amino-group carrier protein]-C-terminal-gamma-(L-ornithyl)-L-glutamate + 2-oxoglutarate = [amino-group carrier protein]-C-terminal-gamma-(L-glutamyl-5-semialdehyde)-L-glutamate + L-glutamate</text>
        <dbReference type="Rhea" id="RHEA:52672"/>
        <dbReference type="Rhea" id="RHEA-COMP:13327"/>
        <dbReference type="Rhea" id="RHEA-COMP:13328"/>
        <dbReference type="ChEBI" id="CHEBI:16810"/>
        <dbReference type="ChEBI" id="CHEBI:29985"/>
        <dbReference type="ChEBI" id="CHEBI:136761"/>
        <dbReference type="ChEBI" id="CHEBI:136763"/>
        <dbReference type="EC" id="2.6.1.124"/>
    </reaction>
</comment>
<comment type="cofactor">
    <cofactor evidence="1">
        <name>pyridoxal 5'-phosphate</name>
        <dbReference type="ChEBI" id="CHEBI:597326"/>
    </cofactor>
    <text evidence="1">Binds 1 pyridoxal phosphate per subunit.</text>
</comment>
<comment type="pathway">
    <text evidence="1">Amino-acid biosynthesis; L-lysine biosynthesis via AAA pathway; L-lysine from L-alpha-aminoadipate (Thermus route): step 4/5.</text>
</comment>
<comment type="pathway">
    <text evidence="1">Amino-acid biosynthesis; L-arginine biosynthesis.</text>
</comment>
<comment type="subunit">
    <text evidence="1">Homodimer.</text>
</comment>
<comment type="subcellular location">
    <subcellularLocation>
        <location evidence="1">Cytoplasm</location>
    </subcellularLocation>
</comment>
<comment type="similarity">
    <text evidence="1">Belongs to the class-III pyridoxal-phosphate-dependent aminotransferase family. LysJ subfamily.</text>
</comment>
<reference key="1">
    <citation type="journal article" date="1999" name="Genetics">
        <title>Divergence of the hyperthermophilic archaea Pyrococcus furiosus and P. horikoshii inferred from complete genomic sequences.</title>
        <authorList>
            <person name="Maeder D.L."/>
            <person name="Weiss R.B."/>
            <person name="Dunn D.M."/>
            <person name="Cherry J.L."/>
            <person name="Gonzalez J.M."/>
            <person name="DiRuggiero J."/>
            <person name="Robb F.T."/>
        </authorList>
    </citation>
    <scope>NUCLEOTIDE SEQUENCE [LARGE SCALE GENOMIC DNA]</scope>
    <source>
        <strain>ATCC 43587 / DSM 3638 / JCM 8422 / Vc1</strain>
    </source>
</reference>
<sequence length="366" mass="40704">MSLYRKRLRLVKGEGIYVWDSQGKKYIDLIAGIGVNVLGHNHPEWVSELQEQLEKLVVAGPMFDHEEKYEMLEELEKFVTYEYVYIGNSGTEAVEAALKFARLYTGRKEIIAMTNAFHGRTMGALSATWKPKYREDFKPLVPGFKHIPFNDVEAAKEAITTETAAVIFEPIQGEGGVVPANEEFVKTLRDLTEDKGALLIADEVQSGLRTGKFLAIEHYKVEPDIVTMGKGIGNGVPVSLTLTNFDVERGKHGSTFGGNPLACKAVAVTLRILRREKLIEKAAEKFIEIKGENVVLTRGKGLMIGIVMKKPVAKVVEELQNRGYLVHTAGQRVIRLLPPLIISKDEINQAKSAIEGVINDIYGRKN</sequence>
<proteinExistence type="inferred from homology"/>
<gene>
    <name evidence="1" type="primary">lysJ</name>
    <name type="ordered locus">PF1685</name>
</gene>
<protein>
    <recommendedName>
        <fullName evidence="1">Putative [LysW]-aminoadipate semialdehyde/glutamate semialdehyde transaminase</fullName>
        <ecNumber evidence="1">2.6.1.118</ecNumber>
        <ecNumber evidence="1">2.6.1.124</ecNumber>
    </recommendedName>
</protein>
<keyword id="KW-0028">Amino-acid biosynthesis</keyword>
<keyword id="KW-0032">Aminotransferase</keyword>
<keyword id="KW-0055">Arginine biosynthesis</keyword>
<keyword id="KW-0963">Cytoplasm</keyword>
<keyword id="KW-0457">Lysine biosynthesis</keyword>
<keyword id="KW-0663">Pyridoxal phosphate</keyword>
<keyword id="KW-1185">Reference proteome</keyword>
<keyword id="KW-0808">Transferase</keyword>